<feature type="chain" id="PRO_0000294474" description="Low-density lipoprotein receptor-related protein 5-like protein">
    <location>
        <begin position="1"/>
        <end position="252"/>
    </location>
</feature>
<feature type="repeat" description="LDL-receptor class B 1">
    <location>
        <begin position="3"/>
        <end position="45"/>
    </location>
</feature>
<feature type="repeat" description="LDL-receptor class B 2">
    <location>
        <begin position="46"/>
        <end position="88"/>
    </location>
</feature>
<feature type="repeat" description="LDL-receptor class B 3">
    <location>
        <begin position="89"/>
        <end position="132"/>
    </location>
</feature>
<feature type="repeat" description="LDL-receptor class B 4">
    <location>
        <begin position="133"/>
        <end position="175"/>
    </location>
</feature>
<feature type="repeat" description="LDL-receptor class B 5">
    <location>
        <begin position="176"/>
        <end position="218"/>
    </location>
</feature>
<feature type="region of interest" description="Disordered" evidence="1">
    <location>
        <begin position="223"/>
        <end position="247"/>
    </location>
</feature>
<feature type="splice variant" id="VSP_026667" description="In isoform 2." evidence="2">
    <original>TNPHA</original>
    <variation>PGTAE</variation>
    <location>
        <begin position="220"/>
        <end position="224"/>
    </location>
</feature>
<feature type="splice variant" id="VSP_026668" description="In isoform 2." evidence="2">
    <location>
        <begin position="225"/>
        <end position="252"/>
    </location>
</feature>
<feature type="sequence variant" id="VAR_033191" description="In dbSNP:rs17616994.">
    <original>T</original>
    <variation>M</variation>
    <location>
        <position position="61"/>
    </location>
</feature>
<organism>
    <name type="scientific">Homo sapiens</name>
    <name type="common">Human</name>
    <dbReference type="NCBI Taxonomy" id="9606"/>
    <lineage>
        <taxon>Eukaryota</taxon>
        <taxon>Metazoa</taxon>
        <taxon>Chordata</taxon>
        <taxon>Craniata</taxon>
        <taxon>Vertebrata</taxon>
        <taxon>Euteleostomi</taxon>
        <taxon>Mammalia</taxon>
        <taxon>Eutheria</taxon>
        <taxon>Euarchontoglires</taxon>
        <taxon>Primates</taxon>
        <taxon>Haplorrhini</taxon>
        <taxon>Catarrhini</taxon>
        <taxon>Hominidae</taxon>
        <taxon>Homo</taxon>
    </lineage>
</organism>
<evidence type="ECO:0000256" key="1">
    <source>
        <dbReference type="SAM" id="MobiDB-lite"/>
    </source>
</evidence>
<evidence type="ECO:0000303" key="2">
    <source>
    </source>
</evidence>
<dbReference type="EMBL" id="AL137651">
    <property type="status" value="NOT_ANNOTATED_CDS"/>
    <property type="molecule type" value="mRNA"/>
</dbReference>
<dbReference type="EMBL" id="AL022324">
    <property type="status" value="NOT_ANNOTATED_CDS"/>
    <property type="molecule type" value="Genomic_DNA"/>
</dbReference>
<dbReference type="EMBL" id="BC137460">
    <property type="protein sequence ID" value="AAI37461.1"/>
    <property type="molecule type" value="mRNA"/>
</dbReference>
<dbReference type="EMBL" id="BC137463">
    <property type="protein sequence ID" value="AAI37464.1"/>
    <property type="molecule type" value="mRNA"/>
</dbReference>
<dbReference type="EMBL" id="BC139736">
    <property type="protein sequence ID" value="AAI39737.1"/>
    <property type="molecule type" value="mRNA"/>
</dbReference>
<dbReference type="RefSeq" id="NP_001129244.1">
    <property type="nucleotide sequence ID" value="NM_001135772.1"/>
</dbReference>
<dbReference type="RefSeq" id="NP_872298.1">
    <property type="nucleotide sequence ID" value="NM_182492.2"/>
</dbReference>
<dbReference type="RefSeq" id="XP_006724435.1">
    <property type="nucleotide sequence ID" value="XM_006724372.3"/>
</dbReference>
<dbReference type="RefSeq" id="XP_016884572.1">
    <property type="nucleotide sequence ID" value="XM_017029083.1"/>
</dbReference>
<dbReference type="RefSeq" id="XP_016884573.1">
    <property type="nucleotide sequence ID" value="XM_017029084.1"/>
</dbReference>
<dbReference type="RefSeq" id="XP_016884574.1">
    <property type="nucleotide sequence ID" value="XM_017029085.1"/>
</dbReference>
<dbReference type="RefSeq" id="XP_016884575.1">
    <property type="nucleotide sequence ID" value="XM_017029086.1"/>
</dbReference>
<dbReference type="RefSeq" id="XP_016884576.1">
    <property type="nucleotide sequence ID" value="XM_017029087.1"/>
</dbReference>
<dbReference type="RefSeq" id="XP_016884577.1">
    <property type="nucleotide sequence ID" value="XM_017029088.1"/>
</dbReference>
<dbReference type="SMR" id="A4QPB2"/>
<dbReference type="BioGRID" id="124819">
    <property type="interactions" value="3"/>
</dbReference>
<dbReference type="FunCoup" id="A4QPB2">
    <property type="interactions" value="6"/>
</dbReference>
<dbReference type="IntAct" id="A4QPB2">
    <property type="interactions" value="2"/>
</dbReference>
<dbReference type="MINT" id="A4QPB2"/>
<dbReference type="STRING" id="9606.ENSP00000482378"/>
<dbReference type="BioMuta" id="LRP5L"/>
<dbReference type="MassIVE" id="A4QPB2"/>
<dbReference type="PaxDb" id="9606-ENSP00000482378"/>
<dbReference type="PeptideAtlas" id="A4QPB2"/>
<dbReference type="ProteomicsDB" id="689">
    <molecule id="A4QPB2-1"/>
</dbReference>
<dbReference type="ProteomicsDB" id="690">
    <molecule id="A4QPB2-2"/>
</dbReference>
<dbReference type="DNASU" id="91355"/>
<dbReference type="UCSC" id="uc010guw.2">
    <molecule id="A4QPB2-1"/>
    <property type="organism name" value="human"/>
</dbReference>
<dbReference type="AGR" id="HGNC:25323"/>
<dbReference type="DisGeNET" id="91355"/>
<dbReference type="GeneCards" id="LRP5L"/>
<dbReference type="HGNC" id="HGNC:25323">
    <property type="gene designation" value="LRP5L"/>
</dbReference>
<dbReference type="neXtProt" id="NX_A4QPB2"/>
<dbReference type="PharmGKB" id="PA142671533"/>
<dbReference type="VEuPathDB" id="HostDB:ENSG00000100068"/>
<dbReference type="eggNOG" id="KOG1215">
    <property type="taxonomic scope" value="Eukaryota"/>
</dbReference>
<dbReference type="HOGENOM" id="CLU_008163_5_0_1"/>
<dbReference type="InParanoid" id="A4QPB2"/>
<dbReference type="OMA" id="HMGTEHI"/>
<dbReference type="PAN-GO" id="A4QPB2">
    <property type="GO annotations" value="13 GO annotations based on evolutionary models"/>
</dbReference>
<dbReference type="PhylomeDB" id="A4QPB2"/>
<dbReference type="PathwayCommons" id="A4QPB2"/>
<dbReference type="SignaLink" id="A4QPB2"/>
<dbReference type="BioGRID-ORCS" id="91355">
    <property type="hits" value="13 hits in 1157 CRISPR screens"/>
</dbReference>
<dbReference type="ChiTaRS" id="LRP5L">
    <property type="organism name" value="human"/>
</dbReference>
<dbReference type="GenomeRNAi" id="91355"/>
<dbReference type="Pharos" id="A4QPB2">
    <property type="development level" value="Tdark"/>
</dbReference>
<dbReference type="PRO" id="PR:A4QPB2"/>
<dbReference type="Proteomes" id="UP000005640">
    <property type="component" value="Chromosome 22"/>
</dbReference>
<dbReference type="RNAct" id="A4QPB2">
    <property type="molecule type" value="protein"/>
</dbReference>
<dbReference type="FunFam" id="2.120.10.30:FF:000162">
    <property type="entry name" value="LDL receptor related protein 5 like"/>
    <property type="match status" value="1"/>
</dbReference>
<dbReference type="Gene3D" id="2.120.10.30">
    <property type="entry name" value="TolB, C-terminal domain"/>
    <property type="match status" value="1"/>
</dbReference>
<dbReference type="InterPro" id="IPR011042">
    <property type="entry name" value="6-blade_b-propeller_TolB-like"/>
</dbReference>
<dbReference type="InterPro" id="IPR050778">
    <property type="entry name" value="Cueball_EGF_LRP_Nidogen"/>
</dbReference>
<dbReference type="InterPro" id="IPR000033">
    <property type="entry name" value="LDLR_classB_rpt"/>
</dbReference>
<dbReference type="PANTHER" id="PTHR46513:SF43">
    <property type="entry name" value="LOW-DENSITY LIPOPROTEIN RECEPTOR-RELATED PROTEIN 5-LIKE PROTEIN"/>
    <property type="match status" value="1"/>
</dbReference>
<dbReference type="PANTHER" id="PTHR46513">
    <property type="entry name" value="VITELLOGENIN RECEPTOR-LIKE PROTEIN-RELATED-RELATED"/>
    <property type="match status" value="1"/>
</dbReference>
<dbReference type="Pfam" id="PF00058">
    <property type="entry name" value="Ldl_recept_b"/>
    <property type="match status" value="2"/>
</dbReference>
<dbReference type="SMART" id="SM00135">
    <property type="entry name" value="LY"/>
    <property type="match status" value="4"/>
</dbReference>
<dbReference type="SUPFAM" id="SSF63825">
    <property type="entry name" value="YWTD domain"/>
    <property type="match status" value="1"/>
</dbReference>
<dbReference type="PROSITE" id="PS51120">
    <property type="entry name" value="LDLRB"/>
    <property type="match status" value="5"/>
</dbReference>
<proteinExistence type="evidence at transcript level"/>
<gene>
    <name type="primary">LRP5L</name>
</gene>
<keyword id="KW-0025">Alternative splicing</keyword>
<keyword id="KW-1185">Reference proteome</keyword>
<keyword id="KW-0677">Repeat</keyword>
<protein>
    <recommendedName>
        <fullName>Low-density lipoprotein receptor-related protein 5-like protein</fullName>
        <shortName>LRP-5-like</shortName>
    </recommendedName>
</protein>
<sequence>MEGHVYWTDDEVWAIRRAYLDGSGAQTLINTKINDPDDIAVNWVARSLYWTHTGTEHIEVTCLNSTSHKILVSEDMDEPRAIALHPEMGLTYWIDWGENPEIKRANLDRQELRVLVNASLGWPNGLALDLQEGKLYWGDAKTDKIEAISVDETKRQTLLKDKLPHIFRFTLLGDFIYWTAWQHHSIKRVHKVKANRDVIIDQLPDLMGLKAVNVDKVVGTNPHADRNGGAATCASSRPTQPGLAAPSRAWNC</sequence>
<reference key="1">
    <citation type="journal article" date="2007" name="BMC Genomics">
        <title>The full-ORF clone resource of the German cDNA consortium.</title>
        <authorList>
            <person name="Bechtel S."/>
            <person name="Rosenfelder H."/>
            <person name="Duda A."/>
            <person name="Schmidt C.P."/>
            <person name="Ernst U."/>
            <person name="Wellenreuther R."/>
            <person name="Mehrle A."/>
            <person name="Schuster C."/>
            <person name="Bahr A."/>
            <person name="Bloecker H."/>
            <person name="Heubner D."/>
            <person name="Hoerlein A."/>
            <person name="Michel G."/>
            <person name="Wedler H."/>
            <person name="Koehrer K."/>
            <person name="Ottenwaelder B."/>
            <person name="Poustka A."/>
            <person name="Wiemann S."/>
            <person name="Schupp I."/>
        </authorList>
    </citation>
    <scope>NUCLEOTIDE SEQUENCE [LARGE SCALE MRNA] (ISOFORM 1)</scope>
    <source>
        <tissue>Testis</tissue>
    </source>
</reference>
<reference key="2">
    <citation type="journal article" date="1999" name="Nature">
        <title>The DNA sequence of human chromosome 22.</title>
        <authorList>
            <person name="Dunham I."/>
            <person name="Hunt A.R."/>
            <person name="Collins J.E."/>
            <person name="Bruskiewich R."/>
            <person name="Beare D.M."/>
            <person name="Clamp M."/>
            <person name="Smink L.J."/>
            <person name="Ainscough R."/>
            <person name="Almeida J.P."/>
            <person name="Babbage A.K."/>
            <person name="Bagguley C."/>
            <person name="Bailey J."/>
            <person name="Barlow K.F."/>
            <person name="Bates K.N."/>
            <person name="Beasley O.P."/>
            <person name="Bird C.P."/>
            <person name="Blakey S.E."/>
            <person name="Bridgeman A.M."/>
            <person name="Buck D."/>
            <person name="Burgess J."/>
            <person name="Burrill W.D."/>
            <person name="Burton J."/>
            <person name="Carder C."/>
            <person name="Carter N.P."/>
            <person name="Chen Y."/>
            <person name="Clark G."/>
            <person name="Clegg S.M."/>
            <person name="Cobley V.E."/>
            <person name="Cole C.G."/>
            <person name="Collier R.E."/>
            <person name="Connor R."/>
            <person name="Conroy D."/>
            <person name="Corby N.R."/>
            <person name="Coville G.J."/>
            <person name="Cox A.V."/>
            <person name="Davis J."/>
            <person name="Dawson E."/>
            <person name="Dhami P.D."/>
            <person name="Dockree C."/>
            <person name="Dodsworth S.J."/>
            <person name="Durbin R.M."/>
            <person name="Ellington A.G."/>
            <person name="Evans K.L."/>
            <person name="Fey J.M."/>
            <person name="Fleming K."/>
            <person name="French L."/>
            <person name="Garner A.A."/>
            <person name="Gilbert J.G.R."/>
            <person name="Goward M.E."/>
            <person name="Grafham D.V."/>
            <person name="Griffiths M.N.D."/>
            <person name="Hall C."/>
            <person name="Hall R.E."/>
            <person name="Hall-Tamlyn G."/>
            <person name="Heathcott R.W."/>
            <person name="Ho S."/>
            <person name="Holmes S."/>
            <person name="Hunt S.E."/>
            <person name="Jones M.C."/>
            <person name="Kershaw J."/>
            <person name="Kimberley A.M."/>
            <person name="King A."/>
            <person name="Laird G.K."/>
            <person name="Langford C.F."/>
            <person name="Leversha M.A."/>
            <person name="Lloyd C."/>
            <person name="Lloyd D.M."/>
            <person name="Martyn I.D."/>
            <person name="Mashreghi-Mohammadi M."/>
            <person name="Matthews L.H."/>
            <person name="Mccann O.T."/>
            <person name="Mcclay J."/>
            <person name="Mclaren S."/>
            <person name="McMurray A.A."/>
            <person name="Milne S.A."/>
            <person name="Mortimore B.J."/>
            <person name="Odell C.N."/>
            <person name="Pavitt R."/>
            <person name="Pearce A.V."/>
            <person name="Pearson D."/>
            <person name="Phillimore B.J.C.T."/>
            <person name="Phillips S.H."/>
            <person name="Plumb R.W."/>
            <person name="Ramsay H."/>
            <person name="Ramsey Y."/>
            <person name="Rogers L."/>
            <person name="Ross M.T."/>
            <person name="Scott C.E."/>
            <person name="Sehra H.K."/>
            <person name="Skuce C.D."/>
            <person name="Smalley S."/>
            <person name="Smith M.L."/>
            <person name="Soderlund C."/>
            <person name="Spragon L."/>
            <person name="Steward C.A."/>
            <person name="Sulston J.E."/>
            <person name="Swann R.M."/>
            <person name="Vaudin M."/>
            <person name="Wall M."/>
            <person name="Wallis J.M."/>
            <person name="Whiteley M.N."/>
            <person name="Willey D.L."/>
            <person name="Williams L."/>
            <person name="Williams S.A."/>
            <person name="Williamson H."/>
            <person name="Wilmer T.E."/>
            <person name="Wilming L."/>
            <person name="Wright C.L."/>
            <person name="Hubbard T."/>
            <person name="Bentley D.R."/>
            <person name="Beck S."/>
            <person name="Rogers J."/>
            <person name="Shimizu N."/>
            <person name="Minoshima S."/>
            <person name="Kawasaki K."/>
            <person name="Sasaki T."/>
            <person name="Asakawa S."/>
            <person name="Kudoh J."/>
            <person name="Shintani A."/>
            <person name="Shibuya K."/>
            <person name="Yoshizaki Y."/>
            <person name="Aoki N."/>
            <person name="Mitsuyama S."/>
            <person name="Roe B.A."/>
            <person name="Chen F."/>
            <person name="Chu L."/>
            <person name="Crabtree J."/>
            <person name="Deschamps S."/>
            <person name="Do A."/>
            <person name="Do T."/>
            <person name="Dorman A."/>
            <person name="Fang F."/>
            <person name="Fu Y."/>
            <person name="Hu P."/>
            <person name="Hua A."/>
            <person name="Kenton S."/>
            <person name="Lai H."/>
            <person name="Lao H.I."/>
            <person name="Lewis J."/>
            <person name="Lewis S."/>
            <person name="Lin S.-P."/>
            <person name="Loh P."/>
            <person name="Malaj E."/>
            <person name="Nguyen T."/>
            <person name="Pan H."/>
            <person name="Phan S."/>
            <person name="Qi S."/>
            <person name="Qian Y."/>
            <person name="Ray L."/>
            <person name="Ren Q."/>
            <person name="Shaull S."/>
            <person name="Sloan D."/>
            <person name="Song L."/>
            <person name="Wang Q."/>
            <person name="Wang Y."/>
            <person name="Wang Z."/>
            <person name="White J."/>
            <person name="Willingham D."/>
            <person name="Wu H."/>
            <person name="Yao Z."/>
            <person name="Zhan M."/>
            <person name="Zhang G."/>
            <person name="Chissoe S."/>
            <person name="Murray J."/>
            <person name="Miller N."/>
            <person name="Minx P."/>
            <person name="Fulton R."/>
            <person name="Johnson D."/>
            <person name="Bemis G."/>
            <person name="Bentley D."/>
            <person name="Bradshaw H."/>
            <person name="Bourne S."/>
            <person name="Cordes M."/>
            <person name="Du Z."/>
            <person name="Fulton L."/>
            <person name="Goela D."/>
            <person name="Graves T."/>
            <person name="Hawkins J."/>
            <person name="Hinds K."/>
            <person name="Kemp K."/>
            <person name="Latreille P."/>
            <person name="Layman D."/>
            <person name="Ozersky P."/>
            <person name="Rohlfing T."/>
            <person name="Scheet P."/>
            <person name="Walker C."/>
            <person name="Wamsley A."/>
            <person name="Wohldmann P."/>
            <person name="Pepin K."/>
            <person name="Nelson J."/>
            <person name="Korf I."/>
            <person name="Bedell J.A."/>
            <person name="Hillier L.W."/>
            <person name="Mardis E."/>
            <person name="Waterston R."/>
            <person name="Wilson R."/>
            <person name="Emanuel B.S."/>
            <person name="Shaikh T."/>
            <person name="Kurahashi H."/>
            <person name="Saitta S."/>
            <person name="Budarf M.L."/>
            <person name="McDermid H.E."/>
            <person name="Johnson A."/>
            <person name="Wong A.C.C."/>
            <person name="Morrow B.E."/>
            <person name="Edelmann L."/>
            <person name="Kim U.J."/>
            <person name="Shizuya H."/>
            <person name="Simon M.I."/>
            <person name="Dumanski J.P."/>
            <person name="Peyrard M."/>
            <person name="Kedra D."/>
            <person name="Seroussi E."/>
            <person name="Fransson I."/>
            <person name="Tapia I."/>
            <person name="Bruder C.E."/>
            <person name="O'Brien K.P."/>
            <person name="Wilkinson P."/>
            <person name="Bodenteich A."/>
            <person name="Hartman K."/>
            <person name="Hu X."/>
            <person name="Khan A.S."/>
            <person name="Lane L."/>
            <person name="Tilahun Y."/>
            <person name="Wright H."/>
        </authorList>
    </citation>
    <scope>NUCLEOTIDE SEQUENCE [LARGE SCALE GENOMIC DNA]</scope>
</reference>
<reference key="3">
    <citation type="journal article" date="2004" name="Genome Res.">
        <title>The status, quality, and expansion of the NIH full-length cDNA project: the Mammalian Gene Collection (MGC).</title>
        <authorList>
            <consortium name="The MGC Project Team"/>
        </authorList>
    </citation>
    <scope>NUCLEOTIDE SEQUENCE [LARGE SCALE MRNA] (ISOFORMS 1 AND 2)</scope>
    <source>
        <tissue>Brain</tissue>
    </source>
</reference>
<accession>A4QPB2</accession>
<accession>B0QYF3</accession>
<accession>B0QYF4</accession>
<accession>B2RPI5</accession>
<comment type="alternative products">
    <event type="alternative splicing"/>
    <isoform>
        <id>A4QPB2-1</id>
        <name>1</name>
        <sequence type="displayed"/>
    </isoform>
    <isoform>
        <id>A4QPB2-2</id>
        <name>2</name>
        <sequence type="described" ref="VSP_026667 VSP_026668"/>
    </isoform>
</comment>
<name>LRP5L_HUMAN</name>